<dbReference type="EC" id="6.3.2.8" evidence="1"/>
<dbReference type="EMBL" id="CP000886">
    <property type="protein sequence ID" value="ABX65605.1"/>
    <property type="molecule type" value="Genomic_DNA"/>
</dbReference>
<dbReference type="RefSeq" id="WP_001096070.1">
    <property type="nucleotide sequence ID" value="NC_010102.1"/>
</dbReference>
<dbReference type="SMR" id="A9MZM0"/>
<dbReference type="KEGG" id="spq:SPAB_00163"/>
<dbReference type="PATRIC" id="fig|1016998.12.peg.155"/>
<dbReference type="HOGENOM" id="CLU_028104_2_2_6"/>
<dbReference type="BioCyc" id="SENT1016998:SPAB_RS00645-MONOMER"/>
<dbReference type="UniPathway" id="UPA00219"/>
<dbReference type="Proteomes" id="UP000008556">
    <property type="component" value="Chromosome"/>
</dbReference>
<dbReference type="GO" id="GO:0005737">
    <property type="term" value="C:cytoplasm"/>
    <property type="evidence" value="ECO:0007669"/>
    <property type="project" value="UniProtKB-SubCell"/>
</dbReference>
<dbReference type="GO" id="GO:0005524">
    <property type="term" value="F:ATP binding"/>
    <property type="evidence" value="ECO:0007669"/>
    <property type="project" value="UniProtKB-UniRule"/>
</dbReference>
<dbReference type="GO" id="GO:0008763">
    <property type="term" value="F:UDP-N-acetylmuramate-L-alanine ligase activity"/>
    <property type="evidence" value="ECO:0007669"/>
    <property type="project" value="UniProtKB-UniRule"/>
</dbReference>
<dbReference type="GO" id="GO:0051301">
    <property type="term" value="P:cell division"/>
    <property type="evidence" value="ECO:0007669"/>
    <property type="project" value="UniProtKB-KW"/>
</dbReference>
<dbReference type="GO" id="GO:0071555">
    <property type="term" value="P:cell wall organization"/>
    <property type="evidence" value="ECO:0007669"/>
    <property type="project" value="UniProtKB-KW"/>
</dbReference>
<dbReference type="GO" id="GO:0009252">
    <property type="term" value="P:peptidoglycan biosynthetic process"/>
    <property type="evidence" value="ECO:0007669"/>
    <property type="project" value="UniProtKB-UniRule"/>
</dbReference>
<dbReference type="GO" id="GO:0008360">
    <property type="term" value="P:regulation of cell shape"/>
    <property type="evidence" value="ECO:0007669"/>
    <property type="project" value="UniProtKB-KW"/>
</dbReference>
<dbReference type="FunFam" id="3.40.1190.10:FF:000001">
    <property type="entry name" value="UDP-N-acetylmuramate--L-alanine ligase"/>
    <property type="match status" value="1"/>
</dbReference>
<dbReference type="FunFam" id="3.40.50.720:FF:000046">
    <property type="entry name" value="UDP-N-acetylmuramate--L-alanine ligase"/>
    <property type="match status" value="1"/>
</dbReference>
<dbReference type="FunFam" id="3.90.190.20:FF:000001">
    <property type="entry name" value="UDP-N-acetylmuramate--L-alanine ligase"/>
    <property type="match status" value="1"/>
</dbReference>
<dbReference type="Gene3D" id="3.90.190.20">
    <property type="entry name" value="Mur ligase, C-terminal domain"/>
    <property type="match status" value="1"/>
</dbReference>
<dbReference type="Gene3D" id="3.40.1190.10">
    <property type="entry name" value="Mur-like, catalytic domain"/>
    <property type="match status" value="1"/>
</dbReference>
<dbReference type="Gene3D" id="3.40.50.720">
    <property type="entry name" value="NAD(P)-binding Rossmann-like Domain"/>
    <property type="match status" value="1"/>
</dbReference>
<dbReference type="HAMAP" id="MF_00046">
    <property type="entry name" value="MurC"/>
    <property type="match status" value="1"/>
</dbReference>
<dbReference type="InterPro" id="IPR036565">
    <property type="entry name" value="Mur-like_cat_sf"/>
</dbReference>
<dbReference type="InterPro" id="IPR004101">
    <property type="entry name" value="Mur_ligase_C"/>
</dbReference>
<dbReference type="InterPro" id="IPR036615">
    <property type="entry name" value="Mur_ligase_C_dom_sf"/>
</dbReference>
<dbReference type="InterPro" id="IPR013221">
    <property type="entry name" value="Mur_ligase_cen"/>
</dbReference>
<dbReference type="InterPro" id="IPR000713">
    <property type="entry name" value="Mur_ligase_N"/>
</dbReference>
<dbReference type="InterPro" id="IPR050061">
    <property type="entry name" value="MurCDEF_pg_biosynth"/>
</dbReference>
<dbReference type="InterPro" id="IPR005758">
    <property type="entry name" value="UDP-N-AcMur_Ala_ligase_MurC"/>
</dbReference>
<dbReference type="NCBIfam" id="TIGR01082">
    <property type="entry name" value="murC"/>
    <property type="match status" value="1"/>
</dbReference>
<dbReference type="PANTHER" id="PTHR43445:SF3">
    <property type="entry name" value="UDP-N-ACETYLMURAMATE--L-ALANINE LIGASE"/>
    <property type="match status" value="1"/>
</dbReference>
<dbReference type="PANTHER" id="PTHR43445">
    <property type="entry name" value="UDP-N-ACETYLMURAMATE--L-ALANINE LIGASE-RELATED"/>
    <property type="match status" value="1"/>
</dbReference>
<dbReference type="Pfam" id="PF01225">
    <property type="entry name" value="Mur_ligase"/>
    <property type="match status" value="1"/>
</dbReference>
<dbReference type="Pfam" id="PF02875">
    <property type="entry name" value="Mur_ligase_C"/>
    <property type="match status" value="1"/>
</dbReference>
<dbReference type="Pfam" id="PF08245">
    <property type="entry name" value="Mur_ligase_M"/>
    <property type="match status" value="1"/>
</dbReference>
<dbReference type="SUPFAM" id="SSF51984">
    <property type="entry name" value="MurCD N-terminal domain"/>
    <property type="match status" value="1"/>
</dbReference>
<dbReference type="SUPFAM" id="SSF53623">
    <property type="entry name" value="MurD-like peptide ligases, catalytic domain"/>
    <property type="match status" value="1"/>
</dbReference>
<dbReference type="SUPFAM" id="SSF53244">
    <property type="entry name" value="MurD-like peptide ligases, peptide-binding domain"/>
    <property type="match status" value="1"/>
</dbReference>
<proteinExistence type="inferred from homology"/>
<comment type="function">
    <text evidence="1">Cell wall formation.</text>
</comment>
<comment type="catalytic activity">
    <reaction evidence="1">
        <text>UDP-N-acetyl-alpha-D-muramate + L-alanine + ATP = UDP-N-acetyl-alpha-D-muramoyl-L-alanine + ADP + phosphate + H(+)</text>
        <dbReference type="Rhea" id="RHEA:23372"/>
        <dbReference type="ChEBI" id="CHEBI:15378"/>
        <dbReference type="ChEBI" id="CHEBI:30616"/>
        <dbReference type="ChEBI" id="CHEBI:43474"/>
        <dbReference type="ChEBI" id="CHEBI:57972"/>
        <dbReference type="ChEBI" id="CHEBI:70757"/>
        <dbReference type="ChEBI" id="CHEBI:83898"/>
        <dbReference type="ChEBI" id="CHEBI:456216"/>
        <dbReference type="EC" id="6.3.2.8"/>
    </reaction>
</comment>
<comment type="pathway">
    <text evidence="1">Cell wall biogenesis; peptidoglycan biosynthesis.</text>
</comment>
<comment type="subcellular location">
    <subcellularLocation>
        <location evidence="1">Cytoplasm</location>
    </subcellularLocation>
</comment>
<comment type="similarity">
    <text evidence="1">Belongs to the MurCDEF family.</text>
</comment>
<name>MURC_SALPB</name>
<feature type="chain" id="PRO_1000074752" description="UDP-N-acetylmuramate--L-alanine ligase">
    <location>
        <begin position="1"/>
        <end position="491"/>
    </location>
</feature>
<feature type="binding site" evidence="1">
    <location>
        <begin position="126"/>
        <end position="132"/>
    </location>
    <ligand>
        <name>ATP</name>
        <dbReference type="ChEBI" id="CHEBI:30616"/>
    </ligand>
</feature>
<accession>A9MZM0</accession>
<gene>
    <name evidence="1" type="primary">murC</name>
    <name type="ordered locus">SPAB_00163</name>
</gene>
<sequence length="491" mass="53438">MNTQQLAKLRSIVPEMRRVRHIHFVGIGGAGMGGIAEVLANEGYQISGSDLAPNPVTQQLTSLGATIFFNHRPENVRDASVVVVSSAISADNPEIVAAHEARIPVIRRAEMLAELMRFRHGIAIAGTHGKTTTTAMVSSIYAEAGLDPTFVNGGLVKAAGVHARLGHSRYLIAEADESDASFLHLQPMVAIVTNIEADHMDTYHGDFENLKQTFINFLHNLPFYGRAVMCVDDPVIRELLPRVGRQTTTYGFSEDADVRVEDYQQIGPQGHFTLLRQGMPDLHVTLNAPGRHNALNAAAAVAVATEEGIADDAILRALESFQGTGRRFDFLGEFPLEPVNGKAGTAMLVDDYGHHPTEVDATIKAARAGWPDKNLVMLFQPHRYTRTRDLYDDFANVLTQVDALLMLDVYPAGEAPIPGADSRSLCRTIRNRGKIDPILVSDPAQVATMLAPVLTGNDLILVQGAGNVGKIARYLSEIKLKPQIQEEEQHG</sequence>
<keyword id="KW-0067">ATP-binding</keyword>
<keyword id="KW-0131">Cell cycle</keyword>
<keyword id="KW-0132">Cell division</keyword>
<keyword id="KW-0133">Cell shape</keyword>
<keyword id="KW-0961">Cell wall biogenesis/degradation</keyword>
<keyword id="KW-0963">Cytoplasm</keyword>
<keyword id="KW-0436">Ligase</keyword>
<keyword id="KW-0547">Nucleotide-binding</keyword>
<keyword id="KW-0573">Peptidoglycan synthesis</keyword>
<evidence type="ECO:0000255" key="1">
    <source>
        <dbReference type="HAMAP-Rule" id="MF_00046"/>
    </source>
</evidence>
<reference key="1">
    <citation type="submission" date="2007-11" db="EMBL/GenBank/DDBJ databases">
        <authorList>
            <consortium name="The Salmonella enterica serovar Paratyphi B Genome Sequencing Project"/>
            <person name="McClelland M."/>
            <person name="Sanderson E.K."/>
            <person name="Porwollik S."/>
            <person name="Spieth J."/>
            <person name="Clifton W.S."/>
            <person name="Fulton R."/>
            <person name="Cordes M."/>
            <person name="Wollam A."/>
            <person name="Shah N."/>
            <person name="Pepin K."/>
            <person name="Bhonagiri V."/>
            <person name="Nash W."/>
            <person name="Johnson M."/>
            <person name="Thiruvilangam P."/>
            <person name="Wilson R."/>
        </authorList>
    </citation>
    <scope>NUCLEOTIDE SEQUENCE [LARGE SCALE GENOMIC DNA]</scope>
    <source>
        <strain>ATCC BAA-1250 / SPB7</strain>
    </source>
</reference>
<protein>
    <recommendedName>
        <fullName evidence="1">UDP-N-acetylmuramate--L-alanine ligase</fullName>
        <ecNumber evidence="1">6.3.2.8</ecNumber>
    </recommendedName>
    <alternativeName>
        <fullName evidence="1">UDP-N-acetylmuramoyl-L-alanine synthetase</fullName>
    </alternativeName>
</protein>
<organism>
    <name type="scientific">Salmonella paratyphi B (strain ATCC BAA-1250 / SPB7)</name>
    <dbReference type="NCBI Taxonomy" id="1016998"/>
    <lineage>
        <taxon>Bacteria</taxon>
        <taxon>Pseudomonadati</taxon>
        <taxon>Pseudomonadota</taxon>
        <taxon>Gammaproteobacteria</taxon>
        <taxon>Enterobacterales</taxon>
        <taxon>Enterobacteriaceae</taxon>
        <taxon>Salmonella</taxon>
    </lineage>
</organism>